<name>TERF_TOLAL</name>
<proteinExistence type="inferred from homology"/>
<comment type="function">
    <text evidence="1 4">Indole diterpene prenyltransferase; part of the gene cluster that mediates the biosynthesis of terpendoles, indole-diterpene (IDT) mycotoxins including terpendole I, terpendole K, terpendole C, as well as the kinesin Eg5 inhibitor terpendole E (PubMed:23261604). Terpendoles biosynthesis begins with the synthesis of geranylgeranyl diphosphate (GGPP) by a yet unidentified GGPP synthase. Condensation of indole-3-glycerol phosphate with GGPP by the prenyltransferase terC then forms 3-geranylgeranylindole (3-GGI), followed by epoxidation and cyclization of this intermediate (by the FAD-dependent monooxygeanse terM and the terpene cyclase terB) to form paspaline. The cytochrome monooxygenase terQ then hydroxylates paspalline at C-11 to yield terpendole E. The cytochrome monooxygenase terP converts terpendole E to 13-desoxyterpendole I, and terQ converts 13-desoxyterpendole I into terpendole I. TerF and terK are required for conversion of terpendole I to terpendole C which is further converted to terpendole K (Probable).</text>
</comment>
<comment type="pathway">
    <text evidence="1">Secondary metabolite biosynthesis.</text>
</comment>
<comment type="disruption phenotype">
    <text evidence="1">The disruption of the whole terpendoles biosynthesis cluster abolishes the terpendoles production.</text>
</comment>
<comment type="similarity">
    <text evidence="3">Belongs to the tryptophan dimethylallyltransferase family.</text>
</comment>
<keyword id="KW-0808">Transferase</keyword>
<organism>
    <name type="scientific">Tolypocladium album</name>
    <name type="common">Soil fungus</name>
    <name type="synonym">Chaunopycnis alba</name>
    <dbReference type="NCBI Taxonomy" id="124418"/>
    <lineage>
        <taxon>Eukaryota</taxon>
        <taxon>Fungi</taxon>
        <taxon>Dikarya</taxon>
        <taxon>Ascomycota</taxon>
        <taxon>Pezizomycotina</taxon>
        <taxon>Sordariomycetes</taxon>
        <taxon>Hypocreomycetidae</taxon>
        <taxon>Hypocreales</taxon>
        <taxon>Ophiocordycipitaceae</taxon>
        <taxon>Tolypocladium</taxon>
    </lineage>
</organism>
<accession>M1UZ09</accession>
<gene>
    <name evidence="2" type="primary">terF</name>
</gene>
<protein>
    <recommendedName>
        <fullName evidence="2">Indole diterpene prenyltransferase terF</fullName>
        <ecNumber evidence="4">2.5.1.-</ecNumber>
    </recommendedName>
    <alternativeName>
        <fullName evidence="2">Terpendoles biosynthesis cluster protein F</fullName>
    </alternativeName>
</protein>
<sequence length="433" mass="48761">MTIDKKPVTAPESDSKSAAGRKYWTQLCTPILSSLLKSSGSYSAEEQETHIQNLSDYVIPNLGPRPSEAHTKSFLTQSGSPFQPSVNFSSKKTQVRYCWELLGPQGGSDSDPLAVEAAQDILSQLCKAFGYSTRWSDTWLSAFAPTLEEAKSVREMLPKWIATFTGGAELPALKRVPFVFVAFDLDGAKTSMKAYYNPKGKEIATGKPASDLTWKVLRSLTPALSSTAIDLVEKFLAERPVFSAVELVGIDLVDEAGLSDARVKLYVHTENNSFNTVRDYITLGGRLQDETTLKGLAILKDIWHLMLQEPDGTDDDYNKPVNDSTMLCQRAYFSFEMRPGRELPEVKTYLPTWNYVRTDLETIQNYEEVFRRCGFEWGKESKYKELFERAFGPANHDRPKPVHCDASYLYSEKKGIYQTLYFSPPLKDGEEYE</sequence>
<feature type="chain" id="PRO_0000460263" description="Indole diterpene prenyltransferase terF">
    <location>
        <begin position="1"/>
        <end position="433"/>
    </location>
</feature>
<dbReference type="EC" id="2.5.1.-" evidence="4"/>
<dbReference type="EMBL" id="AB725916">
    <property type="protein sequence ID" value="BAM84051.1"/>
    <property type="molecule type" value="Genomic_DNA"/>
</dbReference>
<dbReference type="SMR" id="M1UZ09"/>
<dbReference type="GO" id="GO:0016765">
    <property type="term" value="F:transferase activity, transferring alkyl or aryl (other than methyl) groups"/>
    <property type="evidence" value="ECO:0007669"/>
    <property type="project" value="InterPro"/>
</dbReference>
<dbReference type="GO" id="GO:0009820">
    <property type="term" value="P:alkaloid metabolic process"/>
    <property type="evidence" value="ECO:0007669"/>
    <property type="project" value="InterPro"/>
</dbReference>
<dbReference type="CDD" id="cd13929">
    <property type="entry name" value="PT-DMATS_CymD"/>
    <property type="match status" value="1"/>
</dbReference>
<dbReference type="InterPro" id="IPR033964">
    <property type="entry name" value="Aro_prenylTrfase"/>
</dbReference>
<dbReference type="InterPro" id="IPR017795">
    <property type="entry name" value="Aro_prenylTrfase_DMATS"/>
</dbReference>
<dbReference type="NCBIfam" id="TIGR03429">
    <property type="entry name" value="arom_pren_DMATS"/>
    <property type="match status" value="1"/>
</dbReference>
<dbReference type="PANTHER" id="PTHR40627:SF5">
    <property type="entry name" value="INDOLE PRENYLTRANSFERASE TDIB"/>
    <property type="match status" value="1"/>
</dbReference>
<dbReference type="PANTHER" id="PTHR40627">
    <property type="entry name" value="INDOLE PRENYLTRANSFERASE TDIB-RELATED"/>
    <property type="match status" value="1"/>
</dbReference>
<dbReference type="Pfam" id="PF11991">
    <property type="entry name" value="Trp_DMAT"/>
    <property type="match status" value="1"/>
</dbReference>
<dbReference type="SFLD" id="SFLDS00036">
    <property type="entry name" value="Aromatic_Prenyltransferase"/>
    <property type="match status" value="1"/>
</dbReference>
<evidence type="ECO:0000269" key="1">
    <source>
    </source>
</evidence>
<evidence type="ECO:0000303" key="2">
    <source>
    </source>
</evidence>
<evidence type="ECO:0000305" key="3"/>
<evidence type="ECO:0000305" key="4">
    <source>
    </source>
</evidence>
<reference key="1">
    <citation type="journal article" date="2012" name="Chem. Biol.">
        <title>Terpendole E, a kinesin Eg5 inhibitor, is a key biosynthetic intermediate of indole-diterpenes in the producing fungus Chaunopycnis alba.</title>
        <authorList>
            <person name="Motoyama T."/>
            <person name="Hayashi T."/>
            <person name="Hirota H."/>
            <person name="Ueki M."/>
            <person name="Osada H."/>
        </authorList>
    </citation>
    <scope>NUCLEOTIDE SEQUENCE [GENOMIC DNA]</scope>
    <scope>FUNCTION</scope>
    <scope>DISRUPTION PHENOTYPE</scope>
    <scope>PATHWAY</scope>
    <source>
        <strain>RK99-F33</strain>
    </source>
</reference>